<dbReference type="EMBL" id="BC135489">
    <property type="protein sequence ID" value="AAI35490.1"/>
    <property type="molecule type" value="mRNA"/>
</dbReference>
<dbReference type="RefSeq" id="NP_001016708.1">
    <property type="nucleotide sequence ID" value="NM_001016708.2"/>
</dbReference>
<dbReference type="SMR" id="A4QNE0"/>
<dbReference type="FunCoup" id="A4QNE0">
    <property type="interactions" value="3399"/>
</dbReference>
<dbReference type="STRING" id="8364.ENSXETP00000043396"/>
<dbReference type="PaxDb" id="8364-ENSXETP00000046760"/>
<dbReference type="DNASU" id="549462"/>
<dbReference type="GeneID" id="549462"/>
<dbReference type="KEGG" id="xtr:549462"/>
<dbReference type="AGR" id="Xenbase:XB-GENE-975153"/>
<dbReference type="CTD" id="51608"/>
<dbReference type="Xenbase" id="XB-GENE-975153">
    <property type="gene designation" value="get4"/>
</dbReference>
<dbReference type="eggNOG" id="KOG3024">
    <property type="taxonomic scope" value="Eukaryota"/>
</dbReference>
<dbReference type="HOGENOM" id="CLU_046061_2_0_1"/>
<dbReference type="InParanoid" id="A4QNE0"/>
<dbReference type="OMA" id="LMDMMGM"/>
<dbReference type="OrthoDB" id="10252405at2759"/>
<dbReference type="PhylomeDB" id="A4QNE0"/>
<dbReference type="Proteomes" id="UP000008143">
    <property type="component" value="Chromosome 9"/>
</dbReference>
<dbReference type="Bgee" id="ENSXETG00000021638">
    <property type="expression patterns" value="Expressed in skeletal muscle tissue and 13 other cell types or tissues"/>
</dbReference>
<dbReference type="GO" id="GO:0071818">
    <property type="term" value="C:BAT3 complex"/>
    <property type="evidence" value="ECO:0000250"/>
    <property type="project" value="UniProtKB"/>
</dbReference>
<dbReference type="GO" id="GO:0005829">
    <property type="term" value="C:cytosol"/>
    <property type="evidence" value="ECO:0000250"/>
    <property type="project" value="UniProtKB"/>
</dbReference>
<dbReference type="GO" id="GO:0045048">
    <property type="term" value="P:protein insertion into ER membrane"/>
    <property type="evidence" value="ECO:0000250"/>
    <property type="project" value="UniProtKB"/>
</dbReference>
<dbReference type="GO" id="GO:0071816">
    <property type="term" value="P:tail-anchored membrane protein insertion into ER membrane"/>
    <property type="evidence" value="ECO:0000250"/>
    <property type="project" value="UniProtKB"/>
</dbReference>
<dbReference type="FunFam" id="1.25.40.10:FF:000060">
    <property type="entry name" value="Golgi to ER traffic protein 4 homolog"/>
    <property type="match status" value="1"/>
</dbReference>
<dbReference type="Gene3D" id="1.25.40.10">
    <property type="entry name" value="Tetratricopeptide repeat domain"/>
    <property type="match status" value="1"/>
</dbReference>
<dbReference type="InterPro" id="IPR007317">
    <property type="entry name" value="GET4"/>
</dbReference>
<dbReference type="InterPro" id="IPR011990">
    <property type="entry name" value="TPR-like_helical_dom_sf"/>
</dbReference>
<dbReference type="PANTHER" id="PTHR12875">
    <property type="entry name" value="GOLGI TO ER TRAFFIC PROTEIN 4 HOMOLOG"/>
    <property type="match status" value="1"/>
</dbReference>
<dbReference type="PANTHER" id="PTHR12875:SF0">
    <property type="entry name" value="GOLGI TO ER TRAFFIC PROTEIN 4 HOMOLOG"/>
    <property type="match status" value="1"/>
</dbReference>
<dbReference type="Pfam" id="PF04190">
    <property type="entry name" value="GET4"/>
    <property type="match status" value="1"/>
</dbReference>
<proteinExistence type="evidence at transcript level"/>
<gene>
    <name type="primary">get4</name>
</gene>
<keyword id="KW-0963">Cytoplasm</keyword>
<keyword id="KW-1185">Reference proteome</keyword>
<keyword id="KW-0813">Transport</keyword>
<reference key="1">
    <citation type="submission" date="2007-03" db="EMBL/GenBank/DDBJ databases">
        <authorList>
            <consortium name="NIH - Xenopus Gene Collection (XGC) project"/>
        </authorList>
    </citation>
    <scope>NUCLEOTIDE SEQUENCE [LARGE SCALE MRNA]</scope>
    <source>
        <tissue>Embryo</tissue>
    </source>
</reference>
<comment type="function">
    <text evidence="1">As part of a cytosolic protein quality control complex, the bag6/bat3 complex, maintains misfolded and hydrophobic patches-containing proteins in a soluble state and participates in their proper delivery to the endoplasmic reticulum or alternatively can promote their sorting to the proteasome where they undergo degradation. The bag6/bat3 complex is involved in the post-translational delivery of tail-anchored/type II transmembrane proteins to the endoplasmic reticulum membrane. Similarly, the bag6/bat3 complex also functions as a sorting platform for proteins of the secretory pathway that are mislocalized to the cytosol either delivering them to the proteasome for degradation or to the endoplasmic reticulum. The bag6/bat3 complex also plays a role in the endoplasmic reticulum-associated degradation (ERAD), a quality control mechanism that eliminates unwanted proteins of the endoplasmic reticulum through their retrotranslocation to the cytosol and their targeting to the proteasome. It maintains these retrotranslocated proteins in an unfolded yet soluble state condition in the cytosol to ensure their proper delivery to the proteasome.</text>
</comment>
<comment type="subunit">
    <text evidence="1">Component of the bag6/bat3 complex.</text>
</comment>
<comment type="subcellular location">
    <subcellularLocation>
        <location evidence="1">Cytoplasm</location>
        <location evidence="1">Cytosol</location>
    </subcellularLocation>
</comment>
<comment type="similarity">
    <text evidence="3">Belongs to the GET4 family.</text>
</comment>
<feature type="chain" id="PRO_0000403727" description="Golgi to ER traffic protein 4 homolog">
    <location>
        <begin position="1"/>
        <end position="325"/>
    </location>
</feature>
<feature type="region of interest" description="Disordered" evidence="2">
    <location>
        <begin position="1"/>
        <end position="22"/>
    </location>
</feature>
<feature type="region of interest" description="Disordered" evidence="2">
    <location>
        <begin position="306"/>
        <end position="325"/>
    </location>
</feature>
<feature type="compositionally biased region" description="Acidic residues" evidence="2">
    <location>
        <begin position="307"/>
        <end position="317"/>
    </location>
</feature>
<protein>
    <recommendedName>
        <fullName>Golgi to ER traffic protein 4 homolog</fullName>
    </recommendedName>
</protein>
<sequence>MAAAMAEQDGSKGSARNRGGVQRVEGKLRASVEKGDYYEAHQMYRTLFFRYMSQSKHIEARELMYSGALLFFSHSQQNSAADLSMLVLESLEKHEVKVTEELLENLAKLFSLMDPNSPERVAFVSRALKWSSGGSGKFGHPKLHQFLAITLWKEQNYYESRYHFLHSSDGEGCANMLVEYSSTRGYRSEVDMFVAQAVLQFLCLKNKTSASVVFTTYTQKHPSIERGPPFVQPLLNFIWFLLLAVEGGKLTVFTVLCEQYQPSLKRDPMYNEYLDRIGQLFFGVPPKQSSSYGGLLGNLLNSLMGSGEDDDVEDGQEDSSPIELD</sequence>
<accession>A4QNE0</accession>
<name>GET4_XENTR</name>
<organism>
    <name type="scientific">Xenopus tropicalis</name>
    <name type="common">Western clawed frog</name>
    <name type="synonym">Silurana tropicalis</name>
    <dbReference type="NCBI Taxonomy" id="8364"/>
    <lineage>
        <taxon>Eukaryota</taxon>
        <taxon>Metazoa</taxon>
        <taxon>Chordata</taxon>
        <taxon>Craniata</taxon>
        <taxon>Vertebrata</taxon>
        <taxon>Euteleostomi</taxon>
        <taxon>Amphibia</taxon>
        <taxon>Batrachia</taxon>
        <taxon>Anura</taxon>
        <taxon>Pipoidea</taxon>
        <taxon>Pipidae</taxon>
        <taxon>Xenopodinae</taxon>
        <taxon>Xenopus</taxon>
        <taxon>Silurana</taxon>
    </lineage>
</organism>
<evidence type="ECO:0000250" key="1">
    <source>
        <dbReference type="UniProtKB" id="Q7L5D6"/>
    </source>
</evidence>
<evidence type="ECO:0000256" key="2">
    <source>
        <dbReference type="SAM" id="MobiDB-lite"/>
    </source>
</evidence>
<evidence type="ECO:0000305" key="3"/>